<feature type="chain" id="PRO_0000344588" description="L-rhamnose mutarotase">
    <location>
        <begin position="1"/>
        <end position="104"/>
    </location>
</feature>
<feature type="active site" description="Proton donor" evidence="1">
    <location>
        <position position="22"/>
    </location>
</feature>
<feature type="binding site" evidence="1">
    <location>
        <position position="18"/>
    </location>
    <ligand>
        <name>substrate</name>
    </ligand>
</feature>
<feature type="binding site" evidence="1">
    <location>
        <position position="41"/>
    </location>
    <ligand>
        <name>substrate</name>
    </ligand>
</feature>
<feature type="binding site" evidence="1">
    <location>
        <begin position="76"/>
        <end position="77"/>
    </location>
    <ligand>
        <name>substrate</name>
    </ligand>
</feature>
<accession>Q65Q29</accession>
<evidence type="ECO:0000255" key="1">
    <source>
        <dbReference type="HAMAP-Rule" id="MF_01663"/>
    </source>
</evidence>
<evidence type="ECO:0000305" key="2"/>
<sequence length="104" mass="12443">MIRKGFVMQVNPDCHAEYKKRHDEIFPELVEELKSHGAHHYSIFLDKQRNLLFGYVEIENEQRWNDVAKTAACRKWWAFMRDVMPSNPDNSPVSQELEQVFYLD</sequence>
<proteinExistence type="inferred from homology"/>
<organism>
    <name type="scientific">Mannheimia succiniciproducens (strain KCTC 0769BP / MBEL55E)</name>
    <dbReference type="NCBI Taxonomy" id="221988"/>
    <lineage>
        <taxon>Bacteria</taxon>
        <taxon>Pseudomonadati</taxon>
        <taxon>Pseudomonadota</taxon>
        <taxon>Gammaproteobacteria</taxon>
        <taxon>Pasteurellales</taxon>
        <taxon>Pasteurellaceae</taxon>
        <taxon>Basfia</taxon>
    </lineage>
</organism>
<name>RHAM_MANSM</name>
<comment type="function">
    <text evidence="1">Involved in the anomeric conversion of L-rhamnose.</text>
</comment>
<comment type="catalytic activity">
    <reaction evidence="1">
        <text>alpha-L-rhamnose = beta-L-rhamnose</text>
        <dbReference type="Rhea" id="RHEA:25584"/>
        <dbReference type="ChEBI" id="CHEBI:27586"/>
        <dbReference type="ChEBI" id="CHEBI:27907"/>
        <dbReference type="EC" id="5.1.3.32"/>
    </reaction>
</comment>
<comment type="pathway">
    <text evidence="1">Carbohydrate metabolism; L-rhamnose metabolism.</text>
</comment>
<comment type="subunit">
    <text evidence="1">Homodimer.</text>
</comment>
<comment type="subcellular location">
    <subcellularLocation>
        <location evidence="1">Cytoplasm</location>
    </subcellularLocation>
</comment>
<comment type="similarity">
    <text evidence="1">Belongs to the rhamnose mutarotase family.</text>
</comment>
<comment type="sequence caution" evidence="2">
    <conflict type="erroneous initiation">
        <sequence resource="EMBL-CDS" id="AAU38931"/>
    </conflict>
</comment>
<gene>
    <name evidence="1" type="primary">rhaM</name>
    <name type="ordered locus">MS2324</name>
</gene>
<keyword id="KW-0119">Carbohydrate metabolism</keyword>
<keyword id="KW-0963">Cytoplasm</keyword>
<keyword id="KW-0413">Isomerase</keyword>
<keyword id="KW-0684">Rhamnose metabolism</keyword>
<dbReference type="EC" id="5.1.3.32" evidence="1"/>
<dbReference type="EMBL" id="AE016827">
    <property type="protein sequence ID" value="AAU38931.1"/>
    <property type="status" value="ALT_INIT"/>
    <property type="molecule type" value="Genomic_DNA"/>
</dbReference>
<dbReference type="RefSeq" id="WP_041640105.1">
    <property type="nucleotide sequence ID" value="NC_006300.1"/>
</dbReference>
<dbReference type="SMR" id="Q65Q29"/>
<dbReference type="STRING" id="221988.MS2324"/>
<dbReference type="KEGG" id="msu:MS2324"/>
<dbReference type="eggNOG" id="COG3254">
    <property type="taxonomic scope" value="Bacteria"/>
</dbReference>
<dbReference type="HOGENOM" id="CLU_100689_2_0_6"/>
<dbReference type="OrthoDB" id="9799608at2"/>
<dbReference type="UniPathway" id="UPA00125"/>
<dbReference type="Proteomes" id="UP000000607">
    <property type="component" value="Chromosome"/>
</dbReference>
<dbReference type="GO" id="GO:0005737">
    <property type="term" value="C:cytoplasm"/>
    <property type="evidence" value="ECO:0007669"/>
    <property type="project" value="UniProtKB-SubCell"/>
</dbReference>
<dbReference type="GO" id="GO:0062192">
    <property type="term" value="F:L-rhamnose mutarotase activity"/>
    <property type="evidence" value="ECO:0007669"/>
    <property type="project" value="UniProtKB-EC"/>
</dbReference>
<dbReference type="GO" id="GO:0019301">
    <property type="term" value="P:rhamnose catabolic process"/>
    <property type="evidence" value="ECO:0007669"/>
    <property type="project" value="TreeGrafter"/>
</dbReference>
<dbReference type="Gene3D" id="3.30.70.100">
    <property type="match status" value="1"/>
</dbReference>
<dbReference type="HAMAP" id="MF_01663">
    <property type="entry name" value="L_rham_rotase"/>
    <property type="match status" value="1"/>
</dbReference>
<dbReference type="InterPro" id="IPR011008">
    <property type="entry name" value="Dimeric_a/b-barrel"/>
</dbReference>
<dbReference type="InterPro" id="IPR013448">
    <property type="entry name" value="L-rhamnose_mutarotase"/>
</dbReference>
<dbReference type="InterPro" id="IPR008000">
    <property type="entry name" value="Rham/fucose_mutarotase"/>
</dbReference>
<dbReference type="NCBIfam" id="TIGR02625">
    <property type="entry name" value="YiiL_rotase"/>
    <property type="match status" value="1"/>
</dbReference>
<dbReference type="PANTHER" id="PTHR34389">
    <property type="entry name" value="L-RHAMNOSE MUTAROTASE"/>
    <property type="match status" value="1"/>
</dbReference>
<dbReference type="PANTHER" id="PTHR34389:SF2">
    <property type="entry name" value="L-RHAMNOSE MUTAROTASE"/>
    <property type="match status" value="1"/>
</dbReference>
<dbReference type="Pfam" id="PF05336">
    <property type="entry name" value="rhaM"/>
    <property type="match status" value="1"/>
</dbReference>
<dbReference type="SUPFAM" id="SSF54909">
    <property type="entry name" value="Dimeric alpha+beta barrel"/>
    <property type="match status" value="1"/>
</dbReference>
<protein>
    <recommendedName>
        <fullName evidence="1">L-rhamnose mutarotase</fullName>
        <ecNumber evidence="1">5.1.3.32</ecNumber>
    </recommendedName>
    <alternativeName>
        <fullName evidence="1">Rhamnose 1-epimerase</fullName>
    </alternativeName>
    <alternativeName>
        <fullName evidence="1">Type-3 mutarotase</fullName>
    </alternativeName>
</protein>
<reference key="1">
    <citation type="journal article" date="2004" name="Nat. Biotechnol.">
        <title>The genome sequence of the capnophilic rumen bacterium Mannheimia succiniciproducens.</title>
        <authorList>
            <person name="Hong S.H."/>
            <person name="Kim J.S."/>
            <person name="Lee S.Y."/>
            <person name="In Y.H."/>
            <person name="Choi S.S."/>
            <person name="Rih J.-K."/>
            <person name="Kim C.H."/>
            <person name="Jeong H."/>
            <person name="Hur C.G."/>
            <person name="Kim J.J."/>
        </authorList>
    </citation>
    <scope>NUCLEOTIDE SEQUENCE [LARGE SCALE GENOMIC DNA]</scope>
    <source>
        <strain>KCTC 0769BP / MBEL55E</strain>
    </source>
</reference>